<comment type="catalytic activity">
    <reaction evidence="1">
        <text>tRNA(Cys) + L-cysteine + ATP = L-cysteinyl-tRNA(Cys) + AMP + diphosphate</text>
        <dbReference type="Rhea" id="RHEA:17773"/>
        <dbReference type="Rhea" id="RHEA-COMP:9661"/>
        <dbReference type="Rhea" id="RHEA-COMP:9679"/>
        <dbReference type="ChEBI" id="CHEBI:30616"/>
        <dbReference type="ChEBI" id="CHEBI:33019"/>
        <dbReference type="ChEBI" id="CHEBI:35235"/>
        <dbReference type="ChEBI" id="CHEBI:78442"/>
        <dbReference type="ChEBI" id="CHEBI:78517"/>
        <dbReference type="ChEBI" id="CHEBI:456215"/>
        <dbReference type="EC" id="6.1.1.16"/>
    </reaction>
</comment>
<comment type="cofactor">
    <cofactor evidence="1">
        <name>Zn(2+)</name>
        <dbReference type="ChEBI" id="CHEBI:29105"/>
    </cofactor>
    <text evidence="1">Binds 1 zinc ion per subunit.</text>
</comment>
<comment type="subunit">
    <text evidence="1">Monomer.</text>
</comment>
<comment type="subcellular location">
    <subcellularLocation>
        <location evidence="1">Cytoplasm</location>
    </subcellularLocation>
</comment>
<comment type="similarity">
    <text evidence="1">Belongs to the class-I aminoacyl-tRNA synthetase family.</text>
</comment>
<proteinExistence type="inferred from homology"/>
<keyword id="KW-0030">Aminoacyl-tRNA synthetase</keyword>
<keyword id="KW-0067">ATP-binding</keyword>
<keyword id="KW-0963">Cytoplasm</keyword>
<keyword id="KW-0436">Ligase</keyword>
<keyword id="KW-0479">Metal-binding</keyword>
<keyword id="KW-0547">Nucleotide-binding</keyword>
<keyword id="KW-0648">Protein biosynthesis</keyword>
<keyword id="KW-0862">Zinc</keyword>
<accession>Q14G14</accession>
<protein>
    <recommendedName>
        <fullName evidence="1">Cysteine--tRNA ligase</fullName>
        <ecNumber evidence="1">6.1.1.16</ecNumber>
    </recommendedName>
    <alternativeName>
        <fullName evidence="1">Cysteinyl-tRNA synthetase</fullName>
        <shortName evidence="1">CysRS</shortName>
    </alternativeName>
</protein>
<dbReference type="EC" id="6.1.1.16" evidence="1"/>
<dbReference type="EMBL" id="AM286280">
    <property type="protein sequence ID" value="CAL09632.1"/>
    <property type="molecule type" value="Genomic_DNA"/>
</dbReference>
<dbReference type="RefSeq" id="WP_003022540.1">
    <property type="nucleotide sequence ID" value="NC_008245.1"/>
</dbReference>
<dbReference type="SMR" id="Q14G14"/>
<dbReference type="KEGG" id="ftf:FTF1616"/>
<dbReference type="HOGENOM" id="CLU_013528_0_1_6"/>
<dbReference type="GO" id="GO:0005829">
    <property type="term" value="C:cytosol"/>
    <property type="evidence" value="ECO:0007669"/>
    <property type="project" value="TreeGrafter"/>
</dbReference>
<dbReference type="GO" id="GO:0005524">
    <property type="term" value="F:ATP binding"/>
    <property type="evidence" value="ECO:0007669"/>
    <property type="project" value="UniProtKB-UniRule"/>
</dbReference>
<dbReference type="GO" id="GO:0004817">
    <property type="term" value="F:cysteine-tRNA ligase activity"/>
    <property type="evidence" value="ECO:0007669"/>
    <property type="project" value="UniProtKB-UniRule"/>
</dbReference>
<dbReference type="GO" id="GO:0008270">
    <property type="term" value="F:zinc ion binding"/>
    <property type="evidence" value="ECO:0007669"/>
    <property type="project" value="UniProtKB-UniRule"/>
</dbReference>
<dbReference type="GO" id="GO:0006423">
    <property type="term" value="P:cysteinyl-tRNA aminoacylation"/>
    <property type="evidence" value="ECO:0007669"/>
    <property type="project" value="UniProtKB-UniRule"/>
</dbReference>
<dbReference type="CDD" id="cd07963">
    <property type="entry name" value="Anticodon_Ia_Cys"/>
    <property type="match status" value="1"/>
</dbReference>
<dbReference type="CDD" id="cd00672">
    <property type="entry name" value="CysRS_core"/>
    <property type="match status" value="1"/>
</dbReference>
<dbReference type="FunFam" id="3.40.50.620:FF:000009">
    <property type="entry name" value="Cysteine--tRNA ligase"/>
    <property type="match status" value="1"/>
</dbReference>
<dbReference type="Gene3D" id="1.20.120.1910">
    <property type="entry name" value="Cysteine-tRNA ligase, C-terminal anti-codon recognition domain"/>
    <property type="match status" value="1"/>
</dbReference>
<dbReference type="Gene3D" id="3.40.50.620">
    <property type="entry name" value="HUPs"/>
    <property type="match status" value="1"/>
</dbReference>
<dbReference type="HAMAP" id="MF_00041">
    <property type="entry name" value="Cys_tRNA_synth"/>
    <property type="match status" value="1"/>
</dbReference>
<dbReference type="InterPro" id="IPR015803">
    <property type="entry name" value="Cys-tRNA-ligase"/>
</dbReference>
<dbReference type="InterPro" id="IPR015273">
    <property type="entry name" value="Cys-tRNA-synt_Ia_DALR"/>
</dbReference>
<dbReference type="InterPro" id="IPR024909">
    <property type="entry name" value="Cys-tRNA/MSH_ligase"/>
</dbReference>
<dbReference type="InterPro" id="IPR056411">
    <property type="entry name" value="CysS_C"/>
</dbReference>
<dbReference type="InterPro" id="IPR014729">
    <property type="entry name" value="Rossmann-like_a/b/a_fold"/>
</dbReference>
<dbReference type="InterPro" id="IPR032678">
    <property type="entry name" value="tRNA-synt_1_cat_dom"/>
</dbReference>
<dbReference type="InterPro" id="IPR009080">
    <property type="entry name" value="tRNAsynth_Ia_anticodon-bd"/>
</dbReference>
<dbReference type="NCBIfam" id="TIGR00435">
    <property type="entry name" value="cysS"/>
    <property type="match status" value="1"/>
</dbReference>
<dbReference type="PANTHER" id="PTHR10890:SF3">
    <property type="entry name" value="CYSTEINE--TRNA LIGASE, CYTOPLASMIC"/>
    <property type="match status" value="1"/>
</dbReference>
<dbReference type="PANTHER" id="PTHR10890">
    <property type="entry name" value="CYSTEINYL-TRNA SYNTHETASE"/>
    <property type="match status" value="1"/>
</dbReference>
<dbReference type="Pfam" id="PF23493">
    <property type="entry name" value="CysS_C"/>
    <property type="match status" value="1"/>
</dbReference>
<dbReference type="Pfam" id="PF09190">
    <property type="entry name" value="DALR_2"/>
    <property type="match status" value="1"/>
</dbReference>
<dbReference type="Pfam" id="PF01406">
    <property type="entry name" value="tRNA-synt_1e"/>
    <property type="match status" value="1"/>
</dbReference>
<dbReference type="PRINTS" id="PR00983">
    <property type="entry name" value="TRNASYNTHCYS"/>
</dbReference>
<dbReference type="SMART" id="SM00840">
    <property type="entry name" value="DALR_2"/>
    <property type="match status" value="1"/>
</dbReference>
<dbReference type="SUPFAM" id="SSF47323">
    <property type="entry name" value="Anticodon-binding domain of a subclass of class I aminoacyl-tRNA synthetases"/>
    <property type="match status" value="1"/>
</dbReference>
<dbReference type="SUPFAM" id="SSF52374">
    <property type="entry name" value="Nucleotidylyl transferase"/>
    <property type="match status" value="1"/>
</dbReference>
<name>SYC_FRAT1</name>
<evidence type="ECO:0000255" key="1">
    <source>
        <dbReference type="HAMAP-Rule" id="MF_00041"/>
    </source>
</evidence>
<feature type="chain" id="PRO_0000332829" description="Cysteine--tRNA ligase">
    <location>
        <begin position="1"/>
        <end position="464"/>
    </location>
</feature>
<feature type="short sequence motif" description="'HIGH' region">
    <location>
        <begin position="34"/>
        <end position="44"/>
    </location>
</feature>
<feature type="short sequence motif" description="'KMSKS' region">
    <location>
        <begin position="270"/>
        <end position="274"/>
    </location>
</feature>
<feature type="binding site" evidence="1">
    <location>
        <position position="32"/>
    </location>
    <ligand>
        <name>Zn(2+)</name>
        <dbReference type="ChEBI" id="CHEBI:29105"/>
    </ligand>
</feature>
<feature type="binding site" evidence="1">
    <location>
        <position position="213"/>
    </location>
    <ligand>
        <name>Zn(2+)</name>
        <dbReference type="ChEBI" id="CHEBI:29105"/>
    </ligand>
</feature>
<feature type="binding site" evidence="1">
    <location>
        <position position="238"/>
    </location>
    <ligand>
        <name>Zn(2+)</name>
        <dbReference type="ChEBI" id="CHEBI:29105"/>
    </ligand>
</feature>
<feature type="binding site" evidence="1">
    <location>
        <position position="242"/>
    </location>
    <ligand>
        <name>Zn(2+)</name>
        <dbReference type="ChEBI" id="CHEBI:29105"/>
    </ligand>
</feature>
<feature type="binding site" evidence="1">
    <location>
        <position position="273"/>
    </location>
    <ligand>
        <name>ATP</name>
        <dbReference type="ChEBI" id="CHEBI:30616"/>
    </ligand>
</feature>
<sequence>MDFCFMIFYNSLSGQKEQFKPIEANKIKMYACGVTVYDDCHIGHARTYIAFDVINRYFKYRGYDVTLVRNITDIDDKIIKRANENGESTTELVERNIKAMHDVFARLNILKPSKEPRATETIPEMVAMIETLIKKGYAYQGANSDVFYRVTKFADYGKLSKQNLEALQQGSRVDVVEEKENPMDFVLWKMAKEGEPAWDSPWGAGRPGWHIECSAMSKKLLGDTFDIHAGGSDLRFPHHENEIAQSEACNECTFANYWLHSGMVKVNAEKMSKSLNNFFTIVEVLEEYHPEVVRYFLASTVYRSEINYSKENLENAKASVERLFNALRDIEPIEVNLPDDASEYEEKFIKAMDNDFNTPEALAVLFSLAKEINTLKTTNKYKASGYAYLLRKLCDVLGILFTDIEEYFKQGDGADASEIEKLIAERTQAKKDKNYVRADEIRNQLQQQGIILEDSATGTTWKKG</sequence>
<organism>
    <name type="scientific">Francisella tularensis subsp. tularensis (strain FSC 198)</name>
    <dbReference type="NCBI Taxonomy" id="393115"/>
    <lineage>
        <taxon>Bacteria</taxon>
        <taxon>Pseudomonadati</taxon>
        <taxon>Pseudomonadota</taxon>
        <taxon>Gammaproteobacteria</taxon>
        <taxon>Thiotrichales</taxon>
        <taxon>Francisellaceae</taxon>
        <taxon>Francisella</taxon>
    </lineage>
</organism>
<gene>
    <name evidence="1" type="primary">cysS</name>
    <name type="ordered locus">FTF1616</name>
</gene>
<reference key="1">
    <citation type="journal article" date="2007" name="PLoS ONE">
        <title>Genome sequencing shows that European isolates of Francisella tularensis subspecies tularensis are almost identical to US laboratory strain Schu S4.</title>
        <authorList>
            <person name="Chaudhuri R.R."/>
            <person name="Ren C.-P."/>
            <person name="Desmond L."/>
            <person name="Vincent G.A."/>
            <person name="Silman N.J."/>
            <person name="Brehm J.K."/>
            <person name="Elmore M.J."/>
            <person name="Hudson M.J."/>
            <person name="Forsman M."/>
            <person name="Isherwood K.E."/>
            <person name="Gurycova D."/>
            <person name="Minton N.P."/>
            <person name="Titball R.W."/>
            <person name="Pallen M.J."/>
            <person name="Vipond R."/>
        </authorList>
    </citation>
    <scope>NUCLEOTIDE SEQUENCE [LARGE SCALE GENOMIC DNA]</scope>
    <source>
        <strain>FSC 198</strain>
    </source>
</reference>